<proteinExistence type="inferred from homology"/>
<organism>
    <name type="scientific">Xylella fastidiosa (strain Temecula1 / ATCC 700964)</name>
    <dbReference type="NCBI Taxonomy" id="183190"/>
    <lineage>
        <taxon>Bacteria</taxon>
        <taxon>Pseudomonadati</taxon>
        <taxon>Pseudomonadota</taxon>
        <taxon>Gammaproteobacteria</taxon>
        <taxon>Lysobacterales</taxon>
        <taxon>Lysobacteraceae</taxon>
        <taxon>Xylella</taxon>
    </lineage>
</organism>
<sequence>MSLSDIQQAILSLITNNINADGVSPSQTEIARAFGFKGVRAVQHHLDVLEQQGMIRRIPGQARGIRLKHLTEVDEVALALQSKDVLRLPVLGRVAAGQPIGADIGEDHVVLLDRVFFSPAPDYLLRVQGDSMRDEGIFDGDLIGVHRTQDAHSGQIVVARIDDEITVKLLKISKDRIRLLPRNPDFAPIEVRSDQDFAIEGLYCGLLRPNR</sequence>
<accession>Q87F45</accession>
<evidence type="ECO:0000255" key="1">
    <source>
        <dbReference type="HAMAP-Rule" id="MF_00015"/>
    </source>
</evidence>
<comment type="function">
    <text evidence="1">Represses a number of genes involved in the response to DNA damage (SOS response), including recA and lexA. In the presence of single-stranded DNA, RecA interacts with LexA causing an autocatalytic cleavage which disrupts the DNA-binding part of LexA, leading to derepression of the SOS regulon and eventually DNA repair.</text>
</comment>
<comment type="catalytic activity">
    <reaction evidence="1">
        <text>Hydrolysis of Ala-|-Gly bond in repressor LexA.</text>
        <dbReference type="EC" id="3.4.21.88"/>
    </reaction>
</comment>
<comment type="subunit">
    <text evidence="1">Homodimer.</text>
</comment>
<comment type="similarity">
    <text evidence="1">Belongs to the peptidase S24 family.</text>
</comment>
<gene>
    <name evidence="1" type="primary">lexA</name>
    <name type="ordered locus">PD_0092</name>
</gene>
<feature type="chain" id="PRO_0000170114" description="LexA repressor">
    <location>
        <begin position="1"/>
        <end position="211"/>
    </location>
</feature>
<feature type="DNA-binding region" description="H-T-H motif" evidence="1">
    <location>
        <begin position="27"/>
        <end position="47"/>
    </location>
</feature>
<feature type="active site" description="For autocatalytic cleavage activity" evidence="1">
    <location>
        <position position="131"/>
    </location>
</feature>
<feature type="active site" description="For autocatalytic cleavage activity" evidence="1">
    <location>
        <position position="168"/>
    </location>
</feature>
<feature type="site" description="Cleavage; by autolysis" evidence="1">
    <location>
        <begin position="96"/>
        <end position="97"/>
    </location>
</feature>
<dbReference type="EC" id="3.4.21.88" evidence="1"/>
<dbReference type="EMBL" id="AE009442">
    <property type="protein sequence ID" value="AAO27992.1"/>
    <property type="molecule type" value="Genomic_DNA"/>
</dbReference>
<dbReference type="RefSeq" id="WP_004087617.1">
    <property type="nucleotide sequence ID" value="NC_004556.1"/>
</dbReference>
<dbReference type="SMR" id="Q87F45"/>
<dbReference type="MEROPS" id="S24.001"/>
<dbReference type="GeneID" id="93903783"/>
<dbReference type="KEGG" id="xft:PD_0092"/>
<dbReference type="HOGENOM" id="CLU_066192_45_3_6"/>
<dbReference type="Proteomes" id="UP000002516">
    <property type="component" value="Chromosome"/>
</dbReference>
<dbReference type="GO" id="GO:0003677">
    <property type="term" value="F:DNA binding"/>
    <property type="evidence" value="ECO:0007669"/>
    <property type="project" value="UniProtKB-UniRule"/>
</dbReference>
<dbReference type="GO" id="GO:0004252">
    <property type="term" value="F:serine-type endopeptidase activity"/>
    <property type="evidence" value="ECO:0007669"/>
    <property type="project" value="UniProtKB-UniRule"/>
</dbReference>
<dbReference type="GO" id="GO:0006281">
    <property type="term" value="P:DNA repair"/>
    <property type="evidence" value="ECO:0007669"/>
    <property type="project" value="UniProtKB-UniRule"/>
</dbReference>
<dbReference type="GO" id="GO:0006260">
    <property type="term" value="P:DNA replication"/>
    <property type="evidence" value="ECO:0007669"/>
    <property type="project" value="UniProtKB-UniRule"/>
</dbReference>
<dbReference type="GO" id="GO:0045892">
    <property type="term" value="P:negative regulation of DNA-templated transcription"/>
    <property type="evidence" value="ECO:0007669"/>
    <property type="project" value="UniProtKB-UniRule"/>
</dbReference>
<dbReference type="GO" id="GO:0006508">
    <property type="term" value="P:proteolysis"/>
    <property type="evidence" value="ECO:0007669"/>
    <property type="project" value="InterPro"/>
</dbReference>
<dbReference type="GO" id="GO:0009432">
    <property type="term" value="P:SOS response"/>
    <property type="evidence" value="ECO:0007669"/>
    <property type="project" value="UniProtKB-UniRule"/>
</dbReference>
<dbReference type="CDD" id="cd06529">
    <property type="entry name" value="S24_LexA-like"/>
    <property type="match status" value="1"/>
</dbReference>
<dbReference type="FunFam" id="1.10.10.10:FF:000009">
    <property type="entry name" value="LexA repressor"/>
    <property type="match status" value="1"/>
</dbReference>
<dbReference type="FunFam" id="2.10.109.10:FF:000001">
    <property type="entry name" value="LexA repressor"/>
    <property type="match status" value="1"/>
</dbReference>
<dbReference type="Gene3D" id="2.10.109.10">
    <property type="entry name" value="Umud Fragment, subunit A"/>
    <property type="match status" value="1"/>
</dbReference>
<dbReference type="Gene3D" id="1.10.10.10">
    <property type="entry name" value="Winged helix-like DNA-binding domain superfamily/Winged helix DNA-binding domain"/>
    <property type="match status" value="1"/>
</dbReference>
<dbReference type="HAMAP" id="MF_00015">
    <property type="entry name" value="LexA"/>
    <property type="match status" value="1"/>
</dbReference>
<dbReference type="InterPro" id="IPR006200">
    <property type="entry name" value="LexA"/>
</dbReference>
<dbReference type="InterPro" id="IPR039418">
    <property type="entry name" value="LexA-like"/>
</dbReference>
<dbReference type="InterPro" id="IPR036286">
    <property type="entry name" value="LexA/Signal_pep-like_sf"/>
</dbReference>
<dbReference type="InterPro" id="IPR006199">
    <property type="entry name" value="LexA_DNA-bd_dom"/>
</dbReference>
<dbReference type="InterPro" id="IPR050077">
    <property type="entry name" value="LexA_repressor"/>
</dbReference>
<dbReference type="InterPro" id="IPR006197">
    <property type="entry name" value="Peptidase_S24_LexA"/>
</dbReference>
<dbReference type="InterPro" id="IPR015927">
    <property type="entry name" value="Peptidase_S24_S26A/B/C"/>
</dbReference>
<dbReference type="InterPro" id="IPR036388">
    <property type="entry name" value="WH-like_DNA-bd_sf"/>
</dbReference>
<dbReference type="InterPro" id="IPR036390">
    <property type="entry name" value="WH_DNA-bd_sf"/>
</dbReference>
<dbReference type="NCBIfam" id="TIGR00498">
    <property type="entry name" value="lexA"/>
    <property type="match status" value="1"/>
</dbReference>
<dbReference type="PANTHER" id="PTHR33516">
    <property type="entry name" value="LEXA REPRESSOR"/>
    <property type="match status" value="1"/>
</dbReference>
<dbReference type="PANTHER" id="PTHR33516:SF2">
    <property type="entry name" value="LEXA REPRESSOR-RELATED"/>
    <property type="match status" value="1"/>
</dbReference>
<dbReference type="Pfam" id="PF01726">
    <property type="entry name" value="LexA_DNA_bind"/>
    <property type="match status" value="1"/>
</dbReference>
<dbReference type="Pfam" id="PF00717">
    <property type="entry name" value="Peptidase_S24"/>
    <property type="match status" value="1"/>
</dbReference>
<dbReference type="PRINTS" id="PR00726">
    <property type="entry name" value="LEXASERPTASE"/>
</dbReference>
<dbReference type="SUPFAM" id="SSF51306">
    <property type="entry name" value="LexA/Signal peptidase"/>
    <property type="match status" value="1"/>
</dbReference>
<dbReference type="SUPFAM" id="SSF46785">
    <property type="entry name" value="Winged helix' DNA-binding domain"/>
    <property type="match status" value="1"/>
</dbReference>
<protein>
    <recommendedName>
        <fullName evidence="1">LexA repressor</fullName>
        <ecNumber evidence="1">3.4.21.88</ecNumber>
    </recommendedName>
</protein>
<reference key="1">
    <citation type="journal article" date="2003" name="J. Bacteriol.">
        <title>Comparative analyses of the complete genome sequences of Pierce's disease and citrus variegated chlorosis strains of Xylella fastidiosa.</title>
        <authorList>
            <person name="Van Sluys M.A."/>
            <person name="de Oliveira M.C."/>
            <person name="Monteiro-Vitorello C.B."/>
            <person name="Miyaki C.Y."/>
            <person name="Furlan L.R."/>
            <person name="Camargo L.E.A."/>
            <person name="da Silva A.C.R."/>
            <person name="Moon D.H."/>
            <person name="Takita M.A."/>
            <person name="Lemos E.G.M."/>
            <person name="Machado M.A."/>
            <person name="Ferro M.I.T."/>
            <person name="da Silva F.R."/>
            <person name="Goldman M.H.S."/>
            <person name="Goldman G.H."/>
            <person name="Lemos M.V.F."/>
            <person name="El-Dorry H."/>
            <person name="Tsai S.M."/>
            <person name="Carrer H."/>
            <person name="Carraro D.M."/>
            <person name="de Oliveira R.C."/>
            <person name="Nunes L.R."/>
            <person name="Siqueira W.J."/>
            <person name="Coutinho L.L."/>
            <person name="Kimura E.T."/>
            <person name="Ferro E.S."/>
            <person name="Harakava R."/>
            <person name="Kuramae E.E."/>
            <person name="Marino C.L."/>
            <person name="Giglioti E."/>
            <person name="Abreu I.L."/>
            <person name="Alves L.M.C."/>
            <person name="do Amaral A.M."/>
            <person name="Baia G.S."/>
            <person name="Blanco S.R."/>
            <person name="Brito M.S."/>
            <person name="Cannavan F.S."/>
            <person name="Celestino A.V."/>
            <person name="da Cunha A.F."/>
            <person name="Fenille R.C."/>
            <person name="Ferro J.A."/>
            <person name="Formighieri E.F."/>
            <person name="Kishi L.T."/>
            <person name="Leoni S.G."/>
            <person name="Oliveira A.R."/>
            <person name="Rosa V.E. Jr."/>
            <person name="Sassaki F.T."/>
            <person name="Sena J.A.D."/>
            <person name="de Souza A.A."/>
            <person name="Truffi D."/>
            <person name="Tsukumo F."/>
            <person name="Yanai G.M."/>
            <person name="Zaros L.G."/>
            <person name="Civerolo E.L."/>
            <person name="Simpson A.J.G."/>
            <person name="Almeida N.F. Jr."/>
            <person name="Setubal J.C."/>
            <person name="Kitajima J.P."/>
        </authorList>
    </citation>
    <scope>NUCLEOTIDE SEQUENCE [LARGE SCALE GENOMIC DNA]</scope>
    <source>
        <strain>Temecula1 / ATCC 700964</strain>
    </source>
</reference>
<keyword id="KW-0068">Autocatalytic cleavage</keyword>
<keyword id="KW-0227">DNA damage</keyword>
<keyword id="KW-0234">DNA repair</keyword>
<keyword id="KW-0235">DNA replication</keyword>
<keyword id="KW-0238">DNA-binding</keyword>
<keyword id="KW-0378">Hydrolase</keyword>
<keyword id="KW-1185">Reference proteome</keyword>
<keyword id="KW-0678">Repressor</keyword>
<keyword id="KW-0742">SOS response</keyword>
<keyword id="KW-0804">Transcription</keyword>
<keyword id="KW-0805">Transcription regulation</keyword>
<name>LEXA_XYLFT</name>